<reference key="1">
    <citation type="journal article" date="2002" name="Environ. Microbiol.">
        <title>Complete genome sequence and comparative analysis of the metabolically versatile Pseudomonas putida KT2440.</title>
        <authorList>
            <person name="Nelson K.E."/>
            <person name="Weinel C."/>
            <person name="Paulsen I.T."/>
            <person name="Dodson R.J."/>
            <person name="Hilbert H."/>
            <person name="Martins dos Santos V.A.P."/>
            <person name="Fouts D.E."/>
            <person name="Gill S.R."/>
            <person name="Pop M."/>
            <person name="Holmes M."/>
            <person name="Brinkac L.M."/>
            <person name="Beanan M.J."/>
            <person name="DeBoy R.T."/>
            <person name="Daugherty S.C."/>
            <person name="Kolonay J.F."/>
            <person name="Madupu R."/>
            <person name="Nelson W.C."/>
            <person name="White O."/>
            <person name="Peterson J.D."/>
            <person name="Khouri H.M."/>
            <person name="Hance I."/>
            <person name="Chris Lee P."/>
            <person name="Holtzapple E.K."/>
            <person name="Scanlan D."/>
            <person name="Tran K."/>
            <person name="Moazzez A."/>
            <person name="Utterback T.R."/>
            <person name="Rizzo M."/>
            <person name="Lee K."/>
            <person name="Kosack D."/>
            <person name="Moestl D."/>
            <person name="Wedler H."/>
            <person name="Lauber J."/>
            <person name="Stjepandic D."/>
            <person name="Hoheisel J."/>
            <person name="Straetz M."/>
            <person name="Heim S."/>
            <person name="Kiewitz C."/>
            <person name="Eisen J.A."/>
            <person name="Timmis K.N."/>
            <person name="Duesterhoeft A."/>
            <person name="Tuemmler B."/>
            <person name="Fraser C.M."/>
        </authorList>
    </citation>
    <scope>NUCLEOTIDE SEQUENCE [LARGE SCALE GENOMIC DNA]</scope>
    <source>
        <strain>ATCC 47054 / DSM 6125 / CFBP 8728 / NCIMB 11950 / KT2440</strain>
    </source>
</reference>
<reference key="2">
    <citation type="journal article" date="2003" name="Extremophiles">
        <title>Comparative genomic analysis of solvent extrusion pumps in Pseudomonas strains exhibiting different degrees of solvent tolerance.</title>
        <authorList>
            <person name="Segura A."/>
            <person name="Rojas A."/>
            <person name="Hurtado A."/>
            <person name="Huertas M.J."/>
            <person name="Ramos J.L."/>
        </authorList>
    </citation>
    <scope>CHARACTERIZATION</scope>
</reference>
<proteinExistence type="evidence at protein level"/>
<organism>
    <name type="scientific">Pseudomonas putida (strain ATCC 47054 / DSM 6125 / CFBP 8728 / NCIMB 11950 / KT2440)</name>
    <dbReference type="NCBI Taxonomy" id="160488"/>
    <lineage>
        <taxon>Bacteria</taxon>
        <taxon>Pseudomonadati</taxon>
        <taxon>Pseudomonadota</taxon>
        <taxon>Gammaproteobacteria</taxon>
        <taxon>Pseudomonadales</taxon>
        <taxon>Pseudomonadaceae</taxon>
        <taxon>Pseudomonas</taxon>
    </lineage>
</organism>
<sequence>MQFKPAVTALVSAVALATLLSGCKKEEAAPAAQAPQVGVVTIQPQAFTLTSELPGRTSAYRVAEVRPQVNGIILKRLFKEGSEVKEGQQLYQIDPAVYEATLANAKANLLATRSLAERYKQLIDEQAVSKQEYDDANAKRLQAEASLKSAQIDLRYTKVLAPISGRIGRSSFTEGALVSNGQTDAMATIQQLDPIYVDVTQSTAELLKLRRDLESGQLQKAGDNAASVQLVLEDGSLFKQEGRLEFSEVAVDETTGSVTLRALFPNPDHTLLPGMFVHARLKAGVNANAILAPQQGVTRDLKGAPTALVVNQENKVELRQLKASRTLGSDWLIEEGLNPGDRLITEGLQYVRPGVEVKVSDATNVKKPAGPDQANAAKADAKAE</sequence>
<protein>
    <recommendedName>
        <fullName>Probable efflux pump periplasmic linker TtgA</fullName>
    </recommendedName>
</protein>
<comment type="function">
    <text>Probable periplasmic linker protein component of the TtgABC efflux pump with unknown specificity.</text>
</comment>
<comment type="subcellular location">
    <subcellularLocation>
        <location evidence="4">Cell inner membrane</location>
        <topology evidence="2">Lipid-anchor</topology>
    </subcellularLocation>
</comment>
<comment type="similarity">
    <text evidence="4">Belongs to the membrane fusion protein (MFP) (TC 8.A.1) family.</text>
</comment>
<comment type="caution">
    <text evidence="4">There are 4 nearly identical operons in various strains of P.putida. The ttgABC operon of strain DOT-T1E and the mepABC operon of strain KT2442-TOL function in solvent and antibiotic efflux; however in strain S12 the arpABC operon functions only in antibiotic efflux. This may be due to different protein expression levels. In KT2400 this operon does not seem to function in toluene efflux.</text>
</comment>
<accession>Q88N30</accession>
<keyword id="KW-0997">Cell inner membrane</keyword>
<keyword id="KW-1003">Cell membrane</keyword>
<keyword id="KW-0175">Coiled coil</keyword>
<keyword id="KW-0449">Lipoprotein</keyword>
<keyword id="KW-0472">Membrane</keyword>
<keyword id="KW-0564">Palmitate</keyword>
<keyword id="KW-1185">Reference proteome</keyword>
<keyword id="KW-0732">Signal</keyword>
<keyword id="KW-0813">Transport</keyword>
<evidence type="ECO:0000255" key="1"/>
<evidence type="ECO:0000255" key="2">
    <source>
        <dbReference type="PROSITE-ProRule" id="PRU00303"/>
    </source>
</evidence>
<evidence type="ECO:0000256" key="3">
    <source>
        <dbReference type="SAM" id="MobiDB-lite"/>
    </source>
</evidence>
<evidence type="ECO:0000305" key="4"/>
<dbReference type="EMBL" id="AE015451">
    <property type="protein sequence ID" value="AAN67009.1"/>
    <property type="molecule type" value="Genomic_DNA"/>
</dbReference>
<dbReference type="RefSeq" id="NP_743545.1">
    <property type="nucleotide sequence ID" value="NC_002947.4"/>
</dbReference>
<dbReference type="RefSeq" id="WP_010952494.1">
    <property type="nucleotide sequence ID" value="NZ_CP169744.1"/>
</dbReference>
<dbReference type="SMR" id="Q88N30"/>
<dbReference type="STRING" id="160488.PP_1386"/>
<dbReference type="PaxDb" id="160488-PP_1386"/>
<dbReference type="GeneID" id="83682178"/>
<dbReference type="KEGG" id="ppu:PP_1386"/>
<dbReference type="PATRIC" id="fig|160488.4.peg.1470"/>
<dbReference type="eggNOG" id="COG0845">
    <property type="taxonomic scope" value="Bacteria"/>
</dbReference>
<dbReference type="HOGENOM" id="CLU_018816_2_1_6"/>
<dbReference type="OrthoDB" id="9800613at2"/>
<dbReference type="PhylomeDB" id="Q88N30"/>
<dbReference type="BioCyc" id="PPUT160488:G1G01-1476-MONOMER"/>
<dbReference type="Proteomes" id="UP000000556">
    <property type="component" value="Chromosome"/>
</dbReference>
<dbReference type="GO" id="GO:0005886">
    <property type="term" value="C:plasma membrane"/>
    <property type="evidence" value="ECO:0007669"/>
    <property type="project" value="UniProtKB-SubCell"/>
</dbReference>
<dbReference type="GO" id="GO:0022857">
    <property type="term" value="F:transmembrane transporter activity"/>
    <property type="evidence" value="ECO:0007669"/>
    <property type="project" value="InterPro"/>
</dbReference>
<dbReference type="GO" id="GO:0046677">
    <property type="term" value="P:response to antibiotic"/>
    <property type="evidence" value="ECO:0007669"/>
    <property type="project" value="TreeGrafter"/>
</dbReference>
<dbReference type="FunFam" id="2.40.420.20:FF:000001">
    <property type="entry name" value="Efflux RND transporter periplasmic adaptor subunit"/>
    <property type="match status" value="1"/>
</dbReference>
<dbReference type="FunFam" id="2.40.30.170:FF:000001">
    <property type="entry name" value="Multidrug resistance efflux transporter MdtE"/>
    <property type="match status" value="1"/>
</dbReference>
<dbReference type="Gene3D" id="2.40.30.170">
    <property type="match status" value="1"/>
</dbReference>
<dbReference type="Gene3D" id="2.40.420.20">
    <property type="match status" value="1"/>
</dbReference>
<dbReference type="Gene3D" id="2.40.50.100">
    <property type="match status" value="1"/>
</dbReference>
<dbReference type="Gene3D" id="1.10.287.470">
    <property type="entry name" value="Helix hairpin bin"/>
    <property type="match status" value="1"/>
</dbReference>
<dbReference type="InterPro" id="IPR043602">
    <property type="entry name" value="CusB-like_dom_1"/>
</dbReference>
<dbReference type="InterPro" id="IPR032317">
    <property type="entry name" value="CusB_D23"/>
</dbReference>
<dbReference type="InterPro" id="IPR051160">
    <property type="entry name" value="MFP_Efflux"/>
</dbReference>
<dbReference type="InterPro" id="IPR006143">
    <property type="entry name" value="RND_pump_MFP"/>
</dbReference>
<dbReference type="NCBIfam" id="TIGR01730">
    <property type="entry name" value="RND_mfp"/>
    <property type="match status" value="1"/>
</dbReference>
<dbReference type="PANTHER" id="PTHR30158">
    <property type="entry name" value="ACRA/E-RELATED COMPONENT OF DRUG EFFLUX TRANSPORTER"/>
    <property type="match status" value="1"/>
</dbReference>
<dbReference type="PANTHER" id="PTHR30158:SF3">
    <property type="entry name" value="MULTIDRUG EFFLUX PUMP SUBUNIT ACRA-RELATED"/>
    <property type="match status" value="1"/>
</dbReference>
<dbReference type="Pfam" id="PF00529">
    <property type="entry name" value="CusB_dom_1"/>
    <property type="match status" value="1"/>
</dbReference>
<dbReference type="Pfam" id="PF16576">
    <property type="entry name" value="HlyD_D23"/>
    <property type="match status" value="1"/>
</dbReference>
<dbReference type="SUPFAM" id="SSF111369">
    <property type="entry name" value="HlyD-like secretion proteins"/>
    <property type="match status" value="1"/>
</dbReference>
<dbReference type="PROSITE" id="PS51257">
    <property type="entry name" value="PROKAR_LIPOPROTEIN"/>
    <property type="match status" value="1"/>
</dbReference>
<gene>
    <name type="primary">ttgA</name>
    <name type="ordered locus">PP_1386</name>
</gene>
<feature type="signal peptide" evidence="2">
    <location>
        <begin position="1"/>
        <end position="22"/>
    </location>
</feature>
<feature type="chain" id="PRO_0000018717" description="Probable efflux pump periplasmic linker TtgA">
    <location>
        <begin position="23"/>
        <end position="384"/>
    </location>
</feature>
<feature type="region of interest" description="Disordered" evidence="3">
    <location>
        <begin position="362"/>
        <end position="384"/>
    </location>
</feature>
<feature type="coiled-coil region" evidence="1">
    <location>
        <begin position="115"/>
        <end position="155"/>
    </location>
</feature>
<feature type="compositionally biased region" description="Low complexity" evidence="3">
    <location>
        <begin position="368"/>
        <end position="378"/>
    </location>
</feature>
<feature type="lipid moiety-binding region" description="N-palmitoyl cysteine" evidence="2">
    <location>
        <position position="23"/>
    </location>
</feature>
<feature type="lipid moiety-binding region" description="S-diacylglycerol cysteine" evidence="2">
    <location>
        <position position="23"/>
    </location>
</feature>
<name>TTGA_PSEPK</name>